<reference key="1">
    <citation type="submission" date="2005-10" db="EMBL/GenBank/DDBJ databases">
        <title>Complete sequence of chromosome 1 of Burkholderia sp. 383.</title>
        <authorList>
            <consortium name="US DOE Joint Genome Institute"/>
            <person name="Copeland A."/>
            <person name="Lucas S."/>
            <person name="Lapidus A."/>
            <person name="Barry K."/>
            <person name="Detter J.C."/>
            <person name="Glavina T."/>
            <person name="Hammon N."/>
            <person name="Israni S."/>
            <person name="Pitluck S."/>
            <person name="Chain P."/>
            <person name="Malfatti S."/>
            <person name="Shin M."/>
            <person name="Vergez L."/>
            <person name="Schmutz J."/>
            <person name="Larimer F."/>
            <person name="Land M."/>
            <person name="Kyrpides N."/>
            <person name="Lykidis A."/>
            <person name="Richardson P."/>
        </authorList>
    </citation>
    <scope>NUCLEOTIDE SEQUENCE [LARGE SCALE GENOMIC DNA]</scope>
    <source>
        <strain>ATCC 17760 / DSM 23089 / LMG 22485 / NCIMB 9086 / R18194 / 383</strain>
    </source>
</reference>
<name>PNP_BURL3</name>
<proteinExistence type="inferred from homology"/>
<accession>Q39EE1</accession>
<feature type="chain" id="PRO_0000329562" description="Polyribonucleotide nucleotidyltransferase">
    <location>
        <begin position="1"/>
        <end position="715"/>
    </location>
</feature>
<feature type="domain" description="KH" evidence="1">
    <location>
        <begin position="560"/>
        <end position="619"/>
    </location>
</feature>
<feature type="domain" description="S1 motif" evidence="1">
    <location>
        <begin position="629"/>
        <end position="697"/>
    </location>
</feature>
<feature type="binding site" evidence="1">
    <location>
        <position position="493"/>
    </location>
    <ligand>
        <name>Mg(2+)</name>
        <dbReference type="ChEBI" id="CHEBI:18420"/>
    </ligand>
</feature>
<feature type="binding site" evidence="1">
    <location>
        <position position="499"/>
    </location>
    <ligand>
        <name>Mg(2+)</name>
        <dbReference type="ChEBI" id="CHEBI:18420"/>
    </ligand>
</feature>
<organism>
    <name type="scientific">Burkholderia lata (strain ATCC 17760 / DSM 23089 / LMG 22485 / NCIMB 9086 / R18194 / 383)</name>
    <dbReference type="NCBI Taxonomy" id="482957"/>
    <lineage>
        <taxon>Bacteria</taxon>
        <taxon>Pseudomonadati</taxon>
        <taxon>Pseudomonadota</taxon>
        <taxon>Betaproteobacteria</taxon>
        <taxon>Burkholderiales</taxon>
        <taxon>Burkholderiaceae</taxon>
        <taxon>Burkholderia</taxon>
        <taxon>Burkholderia cepacia complex</taxon>
    </lineage>
</organism>
<keyword id="KW-0963">Cytoplasm</keyword>
<keyword id="KW-0460">Magnesium</keyword>
<keyword id="KW-0479">Metal-binding</keyword>
<keyword id="KW-0548">Nucleotidyltransferase</keyword>
<keyword id="KW-0694">RNA-binding</keyword>
<keyword id="KW-0808">Transferase</keyword>
<gene>
    <name evidence="1" type="primary">pnp</name>
    <name type="ordered locus">Bcep18194_A5581</name>
</gene>
<dbReference type="EC" id="2.7.7.8" evidence="1"/>
<dbReference type="EMBL" id="CP000151">
    <property type="protein sequence ID" value="ABB09175.1"/>
    <property type="molecule type" value="Genomic_DNA"/>
</dbReference>
<dbReference type="RefSeq" id="WP_011352703.1">
    <property type="nucleotide sequence ID" value="NC_007510.1"/>
</dbReference>
<dbReference type="SMR" id="Q39EE1"/>
<dbReference type="GeneID" id="45095468"/>
<dbReference type="KEGG" id="bur:Bcep18194_A5581"/>
<dbReference type="PATRIC" id="fig|482957.22.peg.2546"/>
<dbReference type="HOGENOM" id="CLU_004217_2_2_4"/>
<dbReference type="Proteomes" id="UP000002705">
    <property type="component" value="Chromosome 1"/>
</dbReference>
<dbReference type="GO" id="GO:0005829">
    <property type="term" value="C:cytosol"/>
    <property type="evidence" value="ECO:0007669"/>
    <property type="project" value="TreeGrafter"/>
</dbReference>
<dbReference type="GO" id="GO:0000175">
    <property type="term" value="F:3'-5'-RNA exonuclease activity"/>
    <property type="evidence" value="ECO:0007669"/>
    <property type="project" value="TreeGrafter"/>
</dbReference>
<dbReference type="GO" id="GO:0000287">
    <property type="term" value="F:magnesium ion binding"/>
    <property type="evidence" value="ECO:0007669"/>
    <property type="project" value="UniProtKB-UniRule"/>
</dbReference>
<dbReference type="GO" id="GO:0004654">
    <property type="term" value="F:polyribonucleotide nucleotidyltransferase activity"/>
    <property type="evidence" value="ECO:0007669"/>
    <property type="project" value="UniProtKB-UniRule"/>
</dbReference>
<dbReference type="GO" id="GO:0003723">
    <property type="term" value="F:RNA binding"/>
    <property type="evidence" value="ECO:0007669"/>
    <property type="project" value="UniProtKB-UniRule"/>
</dbReference>
<dbReference type="GO" id="GO:0006402">
    <property type="term" value="P:mRNA catabolic process"/>
    <property type="evidence" value="ECO:0007669"/>
    <property type="project" value="UniProtKB-UniRule"/>
</dbReference>
<dbReference type="GO" id="GO:0006396">
    <property type="term" value="P:RNA processing"/>
    <property type="evidence" value="ECO:0007669"/>
    <property type="project" value="InterPro"/>
</dbReference>
<dbReference type="CDD" id="cd02393">
    <property type="entry name" value="KH-I_PNPase"/>
    <property type="match status" value="1"/>
</dbReference>
<dbReference type="CDD" id="cd11363">
    <property type="entry name" value="RNase_PH_PNPase_1"/>
    <property type="match status" value="1"/>
</dbReference>
<dbReference type="CDD" id="cd11364">
    <property type="entry name" value="RNase_PH_PNPase_2"/>
    <property type="match status" value="1"/>
</dbReference>
<dbReference type="CDD" id="cd04472">
    <property type="entry name" value="S1_PNPase"/>
    <property type="match status" value="1"/>
</dbReference>
<dbReference type="FunFam" id="3.30.1370.10:FF:000001">
    <property type="entry name" value="Polyribonucleotide nucleotidyltransferase"/>
    <property type="match status" value="1"/>
</dbReference>
<dbReference type="FunFam" id="3.30.230.70:FF:000001">
    <property type="entry name" value="Polyribonucleotide nucleotidyltransferase"/>
    <property type="match status" value="1"/>
</dbReference>
<dbReference type="FunFam" id="3.30.230.70:FF:000002">
    <property type="entry name" value="Polyribonucleotide nucleotidyltransferase"/>
    <property type="match status" value="1"/>
</dbReference>
<dbReference type="FunFam" id="2.40.50.140:FF:000189">
    <property type="entry name" value="Polyribonucleotide nucleotidyltransferase, putative"/>
    <property type="match status" value="1"/>
</dbReference>
<dbReference type="Gene3D" id="3.30.230.70">
    <property type="entry name" value="GHMP Kinase, N-terminal domain"/>
    <property type="match status" value="2"/>
</dbReference>
<dbReference type="Gene3D" id="3.30.1370.10">
    <property type="entry name" value="K Homology domain, type 1"/>
    <property type="match status" value="1"/>
</dbReference>
<dbReference type="Gene3D" id="2.40.50.140">
    <property type="entry name" value="Nucleic acid-binding proteins"/>
    <property type="match status" value="1"/>
</dbReference>
<dbReference type="HAMAP" id="MF_01595">
    <property type="entry name" value="PNPase"/>
    <property type="match status" value="1"/>
</dbReference>
<dbReference type="InterPro" id="IPR001247">
    <property type="entry name" value="ExoRNase_PH_dom1"/>
</dbReference>
<dbReference type="InterPro" id="IPR015847">
    <property type="entry name" value="ExoRNase_PH_dom2"/>
</dbReference>
<dbReference type="InterPro" id="IPR036345">
    <property type="entry name" value="ExoRNase_PH_dom2_sf"/>
</dbReference>
<dbReference type="InterPro" id="IPR004087">
    <property type="entry name" value="KH_dom"/>
</dbReference>
<dbReference type="InterPro" id="IPR004088">
    <property type="entry name" value="KH_dom_type_1"/>
</dbReference>
<dbReference type="InterPro" id="IPR036612">
    <property type="entry name" value="KH_dom_type_1_sf"/>
</dbReference>
<dbReference type="InterPro" id="IPR012340">
    <property type="entry name" value="NA-bd_OB-fold"/>
</dbReference>
<dbReference type="InterPro" id="IPR012162">
    <property type="entry name" value="PNPase"/>
</dbReference>
<dbReference type="InterPro" id="IPR027408">
    <property type="entry name" value="PNPase/RNase_PH_dom_sf"/>
</dbReference>
<dbReference type="InterPro" id="IPR015848">
    <property type="entry name" value="PNPase_PH_RNA-bd_bac/org-type"/>
</dbReference>
<dbReference type="InterPro" id="IPR020568">
    <property type="entry name" value="Ribosomal_Su5_D2-typ_SF"/>
</dbReference>
<dbReference type="InterPro" id="IPR003029">
    <property type="entry name" value="S1_domain"/>
</dbReference>
<dbReference type="NCBIfam" id="TIGR03591">
    <property type="entry name" value="polynuc_phos"/>
    <property type="match status" value="1"/>
</dbReference>
<dbReference type="NCBIfam" id="NF008805">
    <property type="entry name" value="PRK11824.1"/>
    <property type="match status" value="1"/>
</dbReference>
<dbReference type="PANTHER" id="PTHR11252">
    <property type="entry name" value="POLYRIBONUCLEOTIDE NUCLEOTIDYLTRANSFERASE"/>
    <property type="match status" value="1"/>
</dbReference>
<dbReference type="PANTHER" id="PTHR11252:SF0">
    <property type="entry name" value="POLYRIBONUCLEOTIDE NUCLEOTIDYLTRANSFERASE 1, MITOCHONDRIAL"/>
    <property type="match status" value="1"/>
</dbReference>
<dbReference type="Pfam" id="PF00013">
    <property type="entry name" value="KH_1"/>
    <property type="match status" value="1"/>
</dbReference>
<dbReference type="Pfam" id="PF03726">
    <property type="entry name" value="PNPase"/>
    <property type="match status" value="1"/>
</dbReference>
<dbReference type="Pfam" id="PF01138">
    <property type="entry name" value="RNase_PH"/>
    <property type="match status" value="2"/>
</dbReference>
<dbReference type="Pfam" id="PF03725">
    <property type="entry name" value="RNase_PH_C"/>
    <property type="match status" value="2"/>
</dbReference>
<dbReference type="Pfam" id="PF00575">
    <property type="entry name" value="S1"/>
    <property type="match status" value="1"/>
</dbReference>
<dbReference type="PIRSF" id="PIRSF005499">
    <property type="entry name" value="PNPase"/>
    <property type="match status" value="1"/>
</dbReference>
<dbReference type="SMART" id="SM00322">
    <property type="entry name" value="KH"/>
    <property type="match status" value="1"/>
</dbReference>
<dbReference type="SMART" id="SM00316">
    <property type="entry name" value="S1"/>
    <property type="match status" value="1"/>
</dbReference>
<dbReference type="SUPFAM" id="SSF54791">
    <property type="entry name" value="Eukaryotic type KH-domain (KH-domain type I)"/>
    <property type="match status" value="1"/>
</dbReference>
<dbReference type="SUPFAM" id="SSF50249">
    <property type="entry name" value="Nucleic acid-binding proteins"/>
    <property type="match status" value="1"/>
</dbReference>
<dbReference type="SUPFAM" id="SSF55666">
    <property type="entry name" value="Ribonuclease PH domain 2-like"/>
    <property type="match status" value="2"/>
</dbReference>
<dbReference type="SUPFAM" id="SSF54211">
    <property type="entry name" value="Ribosomal protein S5 domain 2-like"/>
    <property type="match status" value="2"/>
</dbReference>
<dbReference type="PROSITE" id="PS50084">
    <property type="entry name" value="KH_TYPE_1"/>
    <property type="match status" value="1"/>
</dbReference>
<dbReference type="PROSITE" id="PS50126">
    <property type="entry name" value="S1"/>
    <property type="match status" value="1"/>
</dbReference>
<comment type="function">
    <text evidence="1">Involved in mRNA degradation. Catalyzes the phosphorolysis of single-stranded polyribonucleotides processively in the 3'- to 5'-direction.</text>
</comment>
<comment type="catalytic activity">
    <reaction evidence="1">
        <text>RNA(n+1) + phosphate = RNA(n) + a ribonucleoside 5'-diphosphate</text>
        <dbReference type="Rhea" id="RHEA:22096"/>
        <dbReference type="Rhea" id="RHEA-COMP:14527"/>
        <dbReference type="Rhea" id="RHEA-COMP:17342"/>
        <dbReference type="ChEBI" id="CHEBI:43474"/>
        <dbReference type="ChEBI" id="CHEBI:57930"/>
        <dbReference type="ChEBI" id="CHEBI:140395"/>
        <dbReference type="EC" id="2.7.7.8"/>
    </reaction>
</comment>
<comment type="cofactor">
    <cofactor evidence="1">
        <name>Mg(2+)</name>
        <dbReference type="ChEBI" id="CHEBI:18420"/>
    </cofactor>
</comment>
<comment type="subcellular location">
    <subcellularLocation>
        <location evidence="1">Cytoplasm</location>
    </subcellularLocation>
</comment>
<comment type="similarity">
    <text evidence="1">Belongs to the polyribonucleotide nucleotidyltransferase family.</text>
</comment>
<sequence>MSMFNKVVKEFQWGQHKVRLETGEVARQASGAVIVDVEDTVVLATVVGAKSAKPGQDFFPLTVDYLEKTYSAGKIPGGFFRREGRPSEHETLTSRLIDRPLRPLFPEGFYNEVQVVIHVLSVNPEIPADIPALIGASAALAVSGLPFNGPVGAARVAYIDNAYVLNPTRDQIKASSLDLVVAGTERAVLMVESEADQLSEDVMLGAVVFGHEQMQVAIDAIHELVREGGKPEWDWQPAPKNEPLIARVTELAQNDLLAAYQLRDKQARSTKLKEVYAATSAKLEEDASAAGTVAADKATVGNVLFDIEAKIVRSQILNGEPRIDGRDTRTVRPIEIRTGVLPRTHGSALFTRGETQALVVATLGTKGDEQIIDALEGEYRERFMLHYNMPPFATGETGRVGSPKRREIGHGRLAKRALVKCLPSADEFGYSIRVVSEITESNGSSSMASVCGGCLALMDAGVPMKAHVAGIAMGLILEGNKFAVLTDILGDEDHLGDMDFKVAGTEQGVTALQMDIKIQGITKEIMQVALAQAKEGRMHILGKMTSAVSGANTQLSEFAPRMITIKINPEKIRDVIGKGGSVIRALTEETGTTIDISDDGVVTIASTNSDGMAEAKKRIENITAEIEVGQVYEGTVLKLLDFGAIVNLLPGKDGLLHISEIVNERVKDINDYLKEGQQVKVKVIQTDEKGRVRLSAKALLNEAAAASQSDTPPQQ</sequence>
<evidence type="ECO:0000255" key="1">
    <source>
        <dbReference type="HAMAP-Rule" id="MF_01595"/>
    </source>
</evidence>
<protein>
    <recommendedName>
        <fullName evidence="1">Polyribonucleotide nucleotidyltransferase</fullName>
        <ecNumber evidence="1">2.7.7.8</ecNumber>
    </recommendedName>
    <alternativeName>
        <fullName evidence="1">Polynucleotide phosphorylase</fullName>
        <shortName evidence="1">PNPase</shortName>
    </alternativeName>
</protein>